<evidence type="ECO:0000305" key="1"/>
<proteinExistence type="inferred from homology"/>
<comment type="function">
    <text>Flagellin is the subunit protein which polymerizes to form the filaments of bacterial flagella.</text>
</comment>
<comment type="subcellular location">
    <subcellularLocation>
        <location>Secreted</location>
    </subcellularLocation>
    <subcellularLocation>
        <location>Bacterial flagellum</location>
    </subcellularLocation>
</comment>
<comment type="similarity">
    <text evidence="1">Belongs to the bacterial flagellin family.</text>
</comment>
<gene>
    <name type="primary">flaB</name>
    <name type="ordered locus">R00670</name>
    <name type="ORF">SMc03038</name>
</gene>
<accession>Q03842</accession>
<organism>
    <name type="scientific">Rhizobium meliloti (strain 1021)</name>
    <name type="common">Ensifer meliloti</name>
    <name type="synonym">Sinorhizobium meliloti</name>
    <dbReference type="NCBI Taxonomy" id="266834"/>
    <lineage>
        <taxon>Bacteria</taxon>
        <taxon>Pseudomonadati</taxon>
        <taxon>Pseudomonadota</taxon>
        <taxon>Alphaproteobacteria</taxon>
        <taxon>Hyphomicrobiales</taxon>
        <taxon>Rhizobiaceae</taxon>
        <taxon>Sinorhizobium/Ensifer group</taxon>
        <taxon>Sinorhizobium</taxon>
    </lineage>
</organism>
<keyword id="KW-0975">Bacterial flagellum</keyword>
<keyword id="KW-1185">Reference proteome</keyword>
<keyword id="KW-0964">Secreted</keyword>
<feature type="chain" id="PRO_0000182623" description="Flagellin B">
    <location>
        <begin position="1"/>
        <end position="394"/>
    </location>
</feature>
<name>FLAB_RHIME</name>
<dbReference type="EMBL" id="M57565">
    <property type="protein sequence ID" value="AAA26280.1"/>
    <property type="molecule type" value="Genomic_DNA"/>
</dbReference>
<dbReference type="EMBL" id="AL591688">
    <property type="protein sequence ID" value="CAC45242.1"/>
    <property type="molecule type" value="Genomic_DNA"/>
</dbReference>
<dbReference type="PIR" id="B39436">
    <property type="entry name" value="B39436"/>
</dbReference>
<dbReference type="RefSeq" id="NP_384776.1">
    <property type="nucleotide sequence ID" value="NC_003047.1"/>
</dbReference>
<dbReference type="RefSeq" id="WP_010968737.1">
    <property type="nucleotide sequence ID" value="NC_003047.1"/>
</dbReference>
<dbReference type="SMR" id="Q03842"/>
<dbReference type="EnsemblBacteria" id="CAC45242">
    <property type="protein sequence ID" value="CAC45242"/>
    <property type="gene ID" value="SMc03038"/>
</dbReference>
<dbReference type="KEGG" id="sme:SMc03038"/>
<dbReference type="PATRIC" id="fig|266834.11.peg.2044"/>
<dbReference type="eggNOG" id="COG1344">
    <property type="taxonomic scope" value="Bacteria"/>
</dbReference>
<dbReference type="HOGENOM" id="CLU_011142_1_0_5"/>
<dbReference type="OrthoDB" id="8328560at2"/>
<dbReference type="Proteomes" id="UP000001976">
    <property type="component" value="Chromosome"/>
</dbReference>
<dbReference type="GO" id="GO:0009288">
    <property type="term" value="C:bacterial-type flagellum"/>
    <property type="evidence" value="ECO:0007669"/>
    <property type="project" value="UniProtKB-SubCell"/>
</dbReference>
<dbReference type="GO" id="GO:0005576">
    <property type="term" value="C:extracellular region"/>
    <property type="evidence" value="ECO:0007669"/>
    <property type="project" value="UniProtKB-SubCell"/>
</dbReference>
<dbReference type="GO" id="GO:0005198">
    <property type="term" value="F:structural molecule activity"/>
    <property type="evidence" value="ECO:0007669"/>
    <property type="project" value="InterPro"/>
</dbReference>
<dbReference type="Gene3D" id="1.20.1330.10">
    <property type="entry name" value="f41 fragment of flagellin, N-terminal domain"/>
    <property type="match status" value="1"/>
</dbReference>
<dbReference type="InterPro" id="IPR001492">
    <property type="entry name" value="Flagellin"/>
</dbReference>
<dbReference type="InterPro" id="IPR046358">
    <property type="entry name" value="Flagellin_C"/>
</dbReference>
<dbReference type="InterPro" id="IPR001029">
    <property type="entry name" value="Flagellin_N"/>
</dbReference>
<dbReference type="PANTHER" id="PTHR42792">
    <property type="entry name" value="FLAGELLIN"/>
    <property type="match status" value="1"/>
</dbReference>
<dbReference type="PANTHER" id="PTHR42792:SF2">
    <property type="entry name" value="FLAGELLIN"/>
    <property type="match status" value="1"/>
</dbReference>
<dbReference type="Pfam" id="PF00700">
    <property type="entry name" value="Flagellin_C"/>
    <property type="match status" value="1"/>
</dbReference>
<dbReference type="Pfam" id="PF00669">
    <property type="entry name" value="Flagellin_N"/>
    <property type="match status" value="1"/>
</dbReference>
<dbReference type="PRINTS" id="PR00207">
    <property type="entry name" value="FLAGELLIN"/>
</dbReference>
<dbReference type="SUPFAM" id="SSF64518">
    <property type="entry name" value="Phase 1 flagellin"/>
    <property type="match status" value="1"/>
</dbReference>
<protein>
    <recommendedName>
        <fullName>Flagellin B</fullName>
    </recommendedName>
</protein>
<reference key="1">
    <citation type="journal article" date="1991" name="J. Bacteriol.">
        <title>Mutations in the two flagellin genes of Rhizobium meliloti.</title>
        <authorList>
            <person name="Bergman K."/>
            <person name="Nulty E."/>
            <person name="Su L."/>
        </authorList>
    </citation>
    <scope>NUCLEOTIDE SEQUENCE [GENOMIC DNA]</scope>
    <source>
        <strain>1021</strain>
    </source>
</reference>
<reference key="2">
    <citation type="journal article" date="2001" name="Proc. Natl. Acad. Sci. U.S.A.">
        <title>Analysis of the chromosome sequence of the legume symbiont Sinorhizobium meliloti strain 1021.</title>
        <authorList>
            <person name="Capela D."/>
            <person name="Barloy-Hubler F."/>
            <person name="Gouzy J."/>
            <person name="Bothe G."/>
            <person name="Ampe F."/>
            <person name="Batut J."/>
            <person name="Boistard P."/>
            <person name="Becker A."/>
            <person name="Boutry M."/>
            <person name="Cadieu E."/>
            <person name="Dreano S."/>
            <person name="Gloux S."/>
            <person name="Godrie T."/>
            <person name="Goffeau A."/>
            <person name="Kahn D."/>
            <person name="Kiss E."/>
            <person name="Lelaure V."/>
            <person name="Masuy D."/>
            <person name="Pohl T."/>
            <person name="Portetelle D."/>
            <person name="Puehler A."/>
            <person name="Purnelle B."/>
            <person name="Ramsperger U."/>
            <person name="Renard C."/>
            <person name="Thebault P."/>
            <person name="Vandenbol M."/>
            <person name="Weidner S."/>
            <person name="Galibert F."/>
        </authorList>
    </citation>
    <scope>NUCLEOTIDE SEQUENCE [LARGE SCALE GENOMIC DNA]</scope>
    <source>
        <strain>1021</strain>
    </source>
</reference>
<reference key="3">
    <citation type="journal article" date="2001" name="Science">
        <title>The composite genome of the legume symbiont Sinorhizobium meliloti.</title>
        <authorList>
            <person name="Galibert F."/>
            <person name="Finan T.M."/>
            <person name="Long S.R."/>
            <person name="Puehler A."/>
            <person name="Abola P."/>
            <person name="Ampe F."/>
            <person name="Barloy-Hubler F."/>
            <person name="Barnett M.J."/>
            <person name="Becker A."/>
            <person name="Boistard P."/>
            <person name="Bothe G."/>
            <person name="Boutry M."/>
            <person name="Bowser L."/>
            <person name="Buhrmester J."/>
            <person name="Cadieu E."/>
            <person name="Capela D."/>
            <person name="Chain P."/>
            <person name="Cowie A."/>
            <person name="Davis R.W."/>
            <person name="Dreano S."/>
            <person name="Federspiel N.A."/>
            <person name="Fisher R.F."/>
            <person name="Gloux S."/>
            <person name="Godrie T."/>
            <person name="Goffeau A."/>
            <person name="Golding B."/>
            <person name="Gouzy J."/>
            <person name="Gurjal M."/>
            <person name="Hernandez-Lucas I."/>
            <person name="Hong A."/>
            <person name="Huizar L."/>
            <person name="Hyman R.W."/>
            <person name="Jones T."/>
            <person name="Kahn D."/>
            <person name="Kahn M.L."/>
            <person name="Kalman S."/>
            <person name="Keating D.H."/>
            <person name="Kiss E."/>
            <person name="Komp C."/>
            <person name="Lelaure V."/>
            <person name="Masuy D."/>
            <person name="Palm C."/>
            <person name="Peck M.C."/>
            <person name="Pohl T.M."/>
            <person name="Portetelle D."/>
            <person name="Purnelle B."/>
            <person name="Ramsperger U."/>
            <person name="Surzycki R."/>
            <person name="Thebault P."/>
            <person name="Vandenbol M."/>
            <person name="Vorhoelter F.J."/>
            <person name="Weidner S."/>
            <person name="Wells D.H."/>
            <person name="Wong K."/>
            <person name="Yeh K.-C."/>
            <person name="Batut J."/>
        </authorList>
    </citation>
    <scope>NUCLEOTIDE SEQUENCE [LARGE SCALE GENOMIC DNA]</scope>
    <source>
        <strain>1021</strain>
    </source>
</reference>
<sequence>MTSILTNIAAMAALQTLRTIGSNMEETQAHVSSGLRVGQAADNAAYWSIATTMRSDNMALSAVQDALGLGAAKVDTAYSGMESAIEVVKEIKAKLVAATEDGVDKAKIQEEIDQLKDQLTSIAEAASFSGENWLQADLSGGPVTKSVVGSFVRDAGGAVSVKKVDYSLNTNSVLFDTAGNTGILDKVYNVSQASVTLPVNVNGTTSEYTVGAYNVDDLIDASATFDGDYANVGAGALAGDYVKVQGSWVKAVDVAATGQEVVYDDGTTKWGVDTTVTGAPATNVAAPASIATIDITIAAQAGNLDALIAGVDEALTDMTSAAADLGSIAMRIDLQSDFVNKLSDSIDSGVGRLVDADMNEESTRLKALQTQQQLAIQSLSIANSASENVLTLFR</sequence>